<accession>B2UW73</accession>
<proteinExistence type="inferred from homology"/>
<name>GLMM_HELPS</name>
<keyword id="KW-0413">Isomerase</keyword>
<keyword id="KW-0460">Magnesium</keyword>
<keyword id="KW-0479">Metal-binding</keyword>
<keyword id="KW-0597">Phosphoprotein</keyword>
<gene>
    <name evidence="1" type="primary">glmM</name>
    <name type="ordered locus">HPSH_00365</name>
</gene>
<feature type="chain" id="PRO_1000201108" description="Phosphoglucosamine mutase">
    <location>
        <begin position="1"/>
        <end position="445"/>
    </location>
</feature>
<feature type="active site" description="Phosphoserine intermediate" evidence="1">
    <location>
        <position position="99"/>
    </location>
</feature>
<feature type="binding site" description="via phosphate group" evidence="1">
    <location>
        <position position="99"/>
    </location>
    <ligand>
        <name>Mg(2+)</name>
        <dbReference type="ChEBI" id="CHEBI:18420"/>
    </ligand>
</feature>
<feature type="binding site" evidence="1">
    <location>
        <position position="242"/>
    </location>
    <ligand>
        <name>Mg(2+)</name>
        <dbReference type="ChEBI" id="CHEBI:18420"/>
    </ligand>
</feature>
<feature type="binding site" evidence="1">
    <location>
        <position position="244"/>
    </location>
    <ligand>
        <name>Mg(2+)</name>
        <dbReference type="ChEBI" id="CHEBI:18420"/>
    </ligand>
</feature>
<feature type="binding site" evidence="1">
    <location>
        <position position="246"/>
    </location>
    <ligand>
        <name>Mg(2+)</name>
        <dbReference type="ChEBI" id="CHEBI:18420"/>
    </ligand>
</feature>
<feature type="modified residue" description="Phosphoserine" evidence="1">
    <location>
        <position position="99"/>
    </location>
</feature>
<organism>
    <name type="scientific">Helicobacter pylori (strain Shi470)</name>
    <dbReference type="NCBI Taxonomy" id="512562"/>
    <lineage>
        <taxon>Bacteria</taxon>
        <taxon>Pseudomonadati</taxon>
        <taxon>Campylobacterota</taxon>
        <taxon>Epsilonproteobacteria</taxon>
        <taxon>Campylobacterales</taxon>
        <taxon>Helicobacteraceae</taxon>
        <taxon>Helicobacter</taxon>
    </lineage>
</organism>
<reference key="1">
    <citation type="submission" date="2008-05" db="EMBL/GenBank/DDBJ databases">
        <title>Genome sequence of Helicobacter pylori from the remote Amazon: traces of Asian ancestry of the first Americans.</title>
        <authorList>
            <person name="Kersulyte D."/>
            <person name="Kalia A."/>
            <person name="Gilman R.H."/>
            <person name="Berg D.E."/>
        </authorList>
    </citation>
    <scope>NUCLEOTIDE SEQUENCE [LARGE SCALE GENOMIC DNA]</scope>
    <source>
        <strain>Shi470</strain>
    </source>
</reference>
<protein>
    <recommendedName>
        <fullName evidence="1">Phosphoglucosamine mutase</fullName>
        <ecNumber evidence="1">5.4.2.10</ecNumber>
    </recommendedName>
</protein>
<sequence>MKIFGTDGVRGKAGVKLTPMFVMRLGIAAGLYFKKHSKTNKILIGKDTRKSGYMVENALVSALTSIGYNVIQIGPMPTPAIAFLTEDMRCDAGIMISASHNPFEDNGIKFFNSYGYKLKEEEEKAIEEIFHDEELLHSSYKVGESVGSAKRIDDVIGRYIVHLKHSFPKHLNLQSLRIVLDTANGAAYKVAPVVFSELGADVLVINDEPNGCNINEQCGALHPNQLSQEVKKYRADLGFAFDGDADRLVVVDNLGNIVHGDKLLGVLGVYQKSKNALSSQAIVATSMSNLALKEYLKSQDLELKHCAIGDKFVSECMQLNKANFGGEQSGHIIFSDYAKTGDGLVCALQVSALVLESKQVSSVALNPFELYPQSLINLNIQKKPPLESLKGYSALLKELDKLEIRHLIRYSGTENKLRILLEAKDEKLLESKMQELKEFFEGHLC</sequence>
<evidence type="ECO:0000255" key="1">
    <source>
        <dbReference type="HAMAP-Rule" id="MF_01554"/>
    </source>
</evidence>
<dbReference type="EC" id="5.4.2.10" evidence="1"/>
<dbReference type="EMBL" id="CP001072">
    <property type="protein sequence ID" value="ACD47538.1"/>
    <property type="molecule type" value="Genomic_DNA"/>
</dbReference>
<dbReference type="RefSeq" id="WP_000688356.1">
    <property type="nucleotide sequence ID" value="NC_010698.2"/>
</dbReference>
<dbReference type="SMR" id="B2UW73"/>
<dbReference type="KEGG" id="hps:HPSH_00365"/>
<dbReference type="HOGENOM" id="CLU_016950_7_0_7"/>
<dbReference type="GO" id="GO:0005829">
    <property type="term" value="C:cytosol"/>
    <property type="evidence" value="ECO:0007669"/>
    <property type="project" value="TreeGrafter"/>
</dbReference>
<dbReference type="GO" id="GO:0000287">
    <property type="term" value="F:magnesium ion binding"/>
    <property type="evidence" value="ECO:0007669"/>
    <property type="project" value="UniProtKB-UniRule"/>
</dbReference>
<dbReference type="GO" id="GO:0008966">
    <property type="term" value="F:phosphoglucosamine mutase activity"/>
    <property type="evidence" value="ECO:0007669"/>
    <property type="project" value="UniProtKB-UniRule"/>
</dbReference>
<dbReference type="GO" id="GO:0004615">
    <property type="term" value="F:phosphomannomutase activity"/>
    <property type="evidence" value="ECO:0007669"/>
    <property type="project" value="TreeGrafter"/>
</dbReference>
<dbReference type="GO" id="GO:0005975">
    <property type="term" value="P:carbohydrate metabolic process"/>
    <property type="evidence" value="ECO:0007669"/>
    <property type="project" value="InterPro"/>
</dbReference>
<dbReference type="GO" id="GO:0009252">
    <property type="term" value="P:peptidoglycan biosynthetic process"/>
    <property type="evidence" value="ECO:0007669"/>
    <property type="project" value="TreeGrafter"/>
</dbReference>
<dbReference type="GO" id="GO:0006048">
    <property type="term" value="P:UDP-N-acetylglucosamine biosynthetic process"/>
    <property type="evidence" value="ECO:0007669"/>
    <property type="project" value="TreeGrafter"/>
</dbReference>
<dbReference type="CDD" id="cd05802">
    <property type="entry name" value="GlmM"/>
    <property type="match status" value="1"/>
</dbReference>
<dbReference type="FunFam" id="3.30.310.50:FF:000013">
    <property type="entry name" value="Phosphoglucosamine mutase"/>
    <property type="match status" value="1"/>
</dbReference>
<dbReference type="FunFam" id="3.40.120.10:FF:000001">
    <property type="entry name" value="Phosphoglucosamine mutase"/>
    <property type="match status" value="1"/>
</dbReference>
<dbReference type="FunFam" id="3.40.120.10:FF:000003">
    <property type="entry name" value="Phosphoglucosamine mutase"/>
    <property type="match status" value="1"/>
</dbReference>
<dbReference type="Gene3D" id="3.40.120.10">
    <property type="entry name" value="Alpha-D-Glucose-1,6-Bisphosphate, subunit A, domain 3"/>
    <property type="match status" value="3"/>
</dbReference>
<dbReference type="Gene3D" id="3.30.310.50">
    <property type="entry name" value="Alpha-D-phosphohexomutase, C-terminal domain"/>
    <property type="match status" value="1"/>
</dbReference>
<dbReference type="HAMAP" id="MF_01554_B">
    <property type="entry name" value="GlmM_B"/>
    <property type="match status" value="1"/>
</dbReference>
<dbReference type="InterPro" id="IPR005844">
    <property type="entry name" value="A-D-PHexomutase_a/b/a-I"/>
</dbReference>
<dbReference type="InterPro" id="IPR016055">
    <property type="entry name" value="A-D-PHexomutase_a/b/a-I/II/III"/>
</dbReference>
<dbReference type="InterPro" id="IPR005845">
    <property type="entry name" value="A-D-PHexomutase_a/b/a-II"/>
</dbReference>
<dbReference type="InterPro" id="IPR005846">
    <property type="entry name" value="A-D-PHexomutase_a/b/a-III"/>
</dbReference>
<dbReference type="InterPro" id="IPR005843">
    <property type="entry name" value="A-D-PHexomutase_C"/>
</dbReference>
<dbReference type="InterPro" id="IPR036900">
    <property type="entry name" value="A-D-PHexomutase_C_sf"/>
</dbReference>
<dbReference type="InterPro" id="IPR016066">
    <property type="entry name" value="A-D-PHexomutase_CS"/>
</dbReference>
<dbReference type="InterPro" id="IPR005841">
    <property type="entry name" value="Alpha-D-phosphohexomutase_SF"/>
</dbReference>
<dbReference type="InterPro" id="IPR006352">
    <property type="entry name" value="GlmM_bact"/>
</dbReference>
<dbReference type="InterPro" id="IPR050060">
    <property type="entry name" value="Phosphoglucosamine_mutase"/>
</dbReference>
<dbReference type="NCBIfam" id="TIGR01455">
    <property type="entry name" value="glmM"/>
    <property type="match status" value="1"/>
</dbReference>
<dbReference type="PANTHER" id="PTHR42946:SF1">
    <property type="entry name" value="PHOSPHOGLUCOMUTASE (ALPHA-D-GLUCOSE-1,6-BISPHOSPHATE-DEPENDENT)"/>
    <property type="match status" value="1"/>
</dbReference>
<dbReference type="PANTHER" id="PTHR42946">
    <property type="entry name" value="PHOSPHOHEXOSE MUTASE"/>
    <property type="match status" value="1"/>
</dbReference>
<dbReference type="Pfam" id="PF02878">
    <property type="entry name" value="PGM_PMM_I"/>
    <property type="match status" value="1"/>
</dbReference>
<dbReference type="Pfam" id="PF02879">
    <property type="entry name" value="PGM_PMM_II"/>
    <property type="match status" value="1"/>
</dbReference>
<dbReference type="Pfam" id="PF02880">
    <property type="entry name" value="PGM_PMM_III"/>
    <property type="match status" value="1"/>
</dbReference>
<dbReference type="Pfam" id="PF00408">
    <property type="entry name" value="PGM_PMM_IV"/>
    <property type="match status" value="1"/>
</dbReference>
<dbReference type="PRINTS" id="PR00509">
    <property type="entry name" value="PGMPMM"/>
</dbReference>
<dbReference type="SUPFAM" id="SSF55957">
    <property type="entry name" value="Phosphoglucomutase, C-terminal domain"/>
    <property type="match status" value="1"/>
</dbReference>
<dbReference type="SUPFAM" id="SSF53738">
    <property type="entry name" value="Phosphoglucomutase, first 3 domains"/>
    <property type="match status" value="3"/>
</dbReference>
<dbReference type="PROSITE" id="PS00710">
    <property type="entry name" value="PGM_PMM"/>
    <property type="match status" value="1"/>
</dbReference>
<comment type="function">
    <text evidence="1">Catalyzes the conversion of glucosamine-6-phosphate to glucosamine-1-phosphate.</text>
</comment>
<comment type="catalytic activity">
    <reaction evidence="1">
        <text>alpha-D-glucosamine 1-phosphate = D-glucosamine 6-phosphate</text>
        <dbReference type="Rhea" id="RHEA:23424"/>
        <dbReference type="ChEBI" id="CHEBI:58516"/>
        <dbReference type="ChEBI" id="CHEBI:58725"/>
        <dbReference type="EC" id="5.4.2.10"/>
    </reaction>
</comment>
<comment type="cofactor">
    <cofactor evidence="1">
        <name>Mg(2+)</name>
        <dbReference type="ChEBI" id="CHEBI:18420"/>
    </cofactor>
    <text evidence="1">Binds 1 Mg(2+) ion per subunit.</text>
</comment>
<comment type="PTM">
    <text evidence="1">Activated by phosphorylation.</text>
</comment>
<comment type="similarity">
    <text evidence="1">Belongs to the phosphohexose mutase family.</text>
</comment>